<comment type="function">
    <text evidence="1">Catalyzes the transfer of a methyl group from 5-methyltetrahydrofolate to homocysteine resulting in methionine formation.</text>
</comment>
<comment type="catalytic activity">
    <reaction evidence="1">
        <text>5-methyltetrahydropteroyltri-L-glutamate + L-homocysteine = tetrahydropteroyltri-L-glutamate + L-methionine</text>
        <dbReference type="Rhea" id="RHEA:21196"/>
        <dbReference type="ChEBI" id="CHEBI:57844"/>
        <dbReference type="ChEBI" id="CHEBI:58140"/>
        <dbReference type="ChEBI" id="CHEBI:58199"/>
        <dbReference type="ChEBI" id="CHEBI:58207"/>
        <dbReference type="EC" id="2.1.1.14"/>
    </reaction>
</comment>
<comment type="cofactor">
    <cofactor evidence="1">
        <name>Zn(2+)</name>
        <dbReference type="ChEBI" id="CHEBI:29105"/>
    </cofactor>
    <text evidence="1">Binds 1 zinc ion per subunit.</text>
</comment>
<comment type="pathway">
    <text evidence="1">Amino-acid biosynthesis; L-methionine biosynthesis via de novo pathway; L-methionine from L-homocysteine (MetE route): step 1/1.</text>
</comment>
<comment type="similarity">
    <text evidence="1">Belongs to the vitamin-B12 independent methionine synthase family.</text>
</comment>
<dbReference type="EC" id="2.1.1.14" evidence="1"/>
<dbReference type="EMBL" id="CP000243">
    <property type="protein sequence ID" value="ABE09810.1"/>
    <property type="molecule type" value="Genomic_DNA"/>
</dbReference>
<dbReference type="RefSeq" id="WP_000153955.1">
    <property type="nucleotide sequence ID" value="NZ_CP064825.1"/>
</dbReference>
<dbReference type="SMR" id="Q1R4A4"/>
<dbReference type="KEGG" id="eci:UTI89_C4393"/>
<dbReference type="HOGENOM" id="CLU_013175_0_0_6"/>
<dbReference type="UniPathway" id="UPA00051">
    <property type="reaction ID" value="UER00082"/>
</dbReference>
<dbReference type="Proteomes" id="UP000001952">
    <property type="component" value="Chromosome"/>
</dbReference>
<dbReference type="GO" id="GO:0003871">
    <property type="term" value="F:5-methyltetrahydropteroyltriglutamate-homocysteine S-methyltransferase activity"/>
    <property type="evidence" value="ECO:0007669"/>
    <property type="project" value="UniProtKB-UniRule"/>
</dbReference>
<dbReference type="GO" id="GO:0008270">
    <property type="term" value="F:zinc ion binding"/>
    <property type="evidence" value="ECO:0007669"/>
    <property type="project" value="InterPro"/>
</dbReference>
<dbReference type="GO" id="GO:0009086">
    <property type="term" value="P:methionine biosynthetic process"/>
    <property type="evidence" value="ECO:0007669"/>
    <property type="project" value="UniProtKB-UniRule"/>
</dbReference>
<dbReference type="GO" id="GO:0032259">
    <property type="term" value="P:methylation"/>
    <property type="evidence" value="ECO:0007669"/>
    <property type="project" value="UniProtKB-KW"/>
</dbReference>
<dbReference type="CDD" id="cd03311">
    <property type="entry name" value="CIMS_C_terminal_like"/>
    <property type="match status" value="1"/>
</dbReference>
<dbReference type="CDD" id="cd03312">
    <property type="entry name" value="CIMS_N_terminal_like"/>
    <property type="match status" value="1"/>
</dbReference>
<dbReference type="FunFam" id="3.20.20.210:FF:000002">
    <property type="entry name" value="5-methyltetrahydropteroyltriglutamate--homocysteine methyltransferase"/>
    <property type="match status" value="1"/>
</dbReference>
<dbReference type="FunFam" id="3.20.20.210:FF:000003">
    <property type="entry name" value="5-methyltetrahydropteroyltriglutamate--homocysteine methyltransferase"/>
    <property type="match status" value="1"/>
</dbReference>
<dbReference type="Gene3D" id="3.20.20.210">
    <property type="match status" value="2"/>
</dbReference>
<dbReference type="HAMAP" id="MF_00172">
    <property type="entry name" value="Meth_synth"/>
    <property type="match status" value="1"/>
</dbReference>
<dbReference type="InterPro" id="IPR013215">
    <property type="entry name" value="Cbl-indep_Met_Synth_N"/>
</dbReference>
<dbReference type="InterPro" id="IPR006276">
    <property type="entry name" value="Cobalamin-indep_Met_synthase"/>
</dbReference>
<dbReference type="InterPro" id="IPR002629">
    <property type="entry name" value="Met_Synth_C/arc"/>
</dbReference>
<dbReference type="InterPro" id="IPR038071">
    <property type="entry name" value="UROD/MetE-like_sf"/>
</dbReference>
<dbReference type="NCBIfam" id="TIGR01371">
    <property type="entry name" value="met_syn_B12ind"/>
    <property type="match status" value="1"/>
</dbReference>
<dbReference type="NCBIfam" id="NF003556">
    <property type="entry name" value="PRK05222.1"/>
    <property type="match status" value="1"/>
</dbReference>
<dbReference type="PANTHER" id="PTHR30519">
    <property type="entry name" value="5-METHYLTETRAHYDROPTEROYLTRIGLUTAMATE--HOMOCYSTEINE METHYLTRANSFERASE"/>
    <property type="match status" value="1"/>
</dbReference>
<dbReference type="Pfam" id="PF08267">
    <property type="entry name" value="Meth_synt_1"/>
    <property type="match status" value="1"/>
</dbReference>
<dbReference type="Pfam" id="PF01717">
    <property type="entry name" value="Meth_synt_2"/>
    <property type="match status" value="1"/>
</dbReference>
<dbReference type="PIRSF" id="PIRSF000382">
    <property type="entry name" value="MeTrfase_B12_ind"/>
    <property type="match status" value="1"/>
</dbReference>
<dbReference type="SUPFAM" id="SSF51726">
    <property type="entry name" value="UROD/MetE-like"/>
    <property type="match status" value="2"/>
</dbReference>
<reference key="1">
    <citation type="journal article" date="2006" name="Proc. Natl. Acad. Sci. U.S.A.">
        <title>Identification of genes subject to positive selection in uropathogenic strains of Escherichia coli: a comparative genomics approach.</title>
        <authorList>
            <person name="Chen S.L."/>
            <person name="Hung C.-S."/>
            <person name="Xu J."/>
            <person name="Reigstad C.S."/>
            <person name="Magrini V."/>
            <person name="Sabo A."/>
            <person name="Blasiar D."/>
            <person name="Bieri T."/>
            <person name="Meyer R.R."/>
            <person name="Ozersky P."/>
            <person name="Armstrong J.R."/>
            <person name="Fulton R.S."/>
            <person name="Latreille J.P."/>
            <person name="Spieth J."/>
            <person name="Hooton T.M."/>
            <person name="Mardis E.R."/>
            <person name="Hultgren S.J."/>
            <person name="Gordon J.I."/>
        </authorList>
    </citation>
    <scope>NUCLEOTIDE SEQUENCE [LARGE SCALE GENOMIC DNA]</scope>
    <source>
        <strain>UTI89 / UPEC</strain>
    </source>
</reference>
<name>METE_ECOUT</name>
<sequence>MTILNHTLGFPRVGLRRELKKAQESYWAGNSTREELLAVGRELRARHWDQQKQAGIDLLPVGDFAWYDHVLTTSLLLGNVPQRHQNNDGSVDIDTLFRIGRGRAPTGEPAAAAEMTKWFNTNYHYMVPEFVKGQQFKLTWTQLLEEVDEALALGHKVKPVLLGPITYLWLGKVKGEQFDRLSLLNDILPVYQQVLAELAKRGIEWVQIDEPALVLELPQAWLNAYKPAYDALQGQVKLLLTTYFEGVTPNLDTITALPVQGLHVDLVHGKDDVAELHKRLPSDWLLSAGLINGRNVWRADLTEKYAQIKDIVGKRDLWVASSCSLLHSPIDLSVETRLDAEVKSWFAFALQKCHELALLRDALNSGDTAALAEWSAPIQARRHSTRVHNPAVEKRLAAITAQDSQRANVYEVRAEAQRARFKLPAWPTTTIGSFPQTTEIRTLRLDFKKGNLDANNYRTGIAEHIKQAIVEQERLGLDVLVHGEAERNDMVEYFGEHLDGFVFTQNGWVQSYGSRCVKPPIVIGDVSRPAPITVEWAKYAQSLTDKPVKGMLTGPVTILCWSFPREDVSRETIAKQIALALRDEVADLEAAGIGIIQIDEPALREGLPLRRSDWDAYLQWGVEAFRINAAVAKDDTQIHTHMCYCEFNDIMDSIAALDADVITIETSRSDMELLESFEEFDYPNEIGPGVYDIHSPNVPSVEWIEALLKKAAKRIPAERLWVNPDCGLKTRGWPETRAALANMVQAAQNLRRG</sequence>
<keyword id="KW-0028">Amino-acid biosynthesis</keyword>
<keyword id="KW-0479">Metal-binding</keyword>
<keyword id="KW-0486">Methionine biosynthesis</keyword>
<keyword id="KW-0489">Methyltransferase</keyword>
<keyword id="KW-0677">Repeat</keyword>
<keyword id="KW-0808">Transferase</keyword>
<keyword id="KW-0862">Zinc</keyword>
<protein>
    <recommendedName>
        <fullName evidence="1">5-methyltetrahydropteroyltriglutamate--homocysteine methyltransferase</fullName>
        <ecNumber evidence="1">2.1.1.14</ecNumber>
    </recommendedName>
    <alternativeName>
        <fullName evidence="1">Cobalamin-independent methionine synthase</fullName>
    </alternativeName>
    <alternativeName>
        <fullName evidence="1">Methionine synthase, vitamin-B12 independent isozyme</fullName>
    </alternativeName>
</protein>
<organism>
    <name type="scientific">Escherichia coli (strain UTI89 / UPEC)</name>
    <dbReference type="NCBI Taxonomy" id="364106"/>
    <lineage>
        <taxon>Bacteria</taxon>
        <taxon>Pseudomonadati</taxon>
        <taxon>Pseudomonadota</taxon>
        <taxon>Gammaproteobacteria</taxon>
        <taxon>Enterobacterales</taxon>
        <taxon>Enterobacteriaceae</taxon>
        <taxon>Escherichia</taxon>
    </lineage>
</organism>
<feature type="chain" id="PRO_1000017242" description="5-methyltetrahydropteroyltriglutamate--homocysteine methyltransferase">
    <location>
        <begin position="1"/>
        <end position="753"/>
    </location>
</feature>
<feature type="active site" description="Proton donor" evidence="1">
    <location>
        <position position="694"/>
    </location>
</feature>
<feature type="binding site" evidence="1">
    <location>
        <begin position="17"/>
        <end position="20"/>
    </location>
    <ligand>
        <name>5-methyltetrahydropteroyltri-L-glutamate</name>
        <dbReference type="ChEBI" id="CHEBI:58207"/>
    </ligand>
</feature>
<feature type="binding site" evidence="1">
    <location>
        <position position="117"/>
    </location>
    <ligand>
        <name>5-methyltetrahydropteroyltri-L-glutamate</name>
        <dbReference type="ChEBI" id="CHEBI:58207"/>
    </ligand>
</feature>
<feature type="binding site" evidence="1">
    <location>
        <begin position="431"/>
        <end position="433"/>
    </location>
    <ligand>
        <name>L-homocysteine</name>
        <dbReference type="ChEBI" id="CHEBI:58199"/>
    </ligand>
</feature>
<feature type="binding site" evidence="1">
    <location>
        <begin position="431"/>
        <end position="433"/>
    </location>
    <ligand>
        <name>L-methionine</name>
        <dbReference type="ChEBI" id="CHEBI:57844"/>
    </ligand>
</feature>
<feature type="binding site" evidence="1">
    <location>
        <position position="484"/>
    </location>
    <ligand>
        <name>L-homocysteine</name>
        <dbReference type="ChEBI" id="CHEBI:58199"/>
    </ligand>
</feature>
<feature type="binding site" evidence="1">
    <location>
        <position position="484"/>
    </location>
    <ligand>
        <name>L-methionine</name>
        <dbReference type="ChEBI" id="CHEBI:57844"/>
    </ligand>
</feature>
<feature type="binding site" evidence="1">
    <location>
        <begin position="515"/>
        <end position="516"/>
    </location>
    <ligand>
        <name>5-methyltetrahydropteroyltri-L-glutamate</name>
        <dbReference type="ChEBI" id="CHEBI:58207"/>
    </ligand>
</feature>
<feature type="binding site" evidence="1">
    <location>
        <position position="561"/>
    </location>
    <ligand>
        <name>5-methyltetrahydropteroyltri-L-glutamate</name>
        <dbReference type="ChEBI" id="CHEBI:58207"/>
    </ligand>
</feature>
<feature type="binding site" evidence="1">
    <location>
        <position position="599"/>
    </location>
    <ligand>
        <name>L-homocysteine</name>
        <dbReference type="ChEBI" id="CHEBI:58199"/>
    </ligand>
</feature>
<feature type="binding site" evidence="1">
    <location>
        <position position="599"/>
    </location>
    <ligand>
        <name>L-methionine</name>
        <dbReference type="ChEBI" id="CHEBI:57844"/>
    </ligand>
</feature>
<feature type="binding site" evidence="1">
    <location>
        <position position="605"/>
    </location>
    <ligand>
        <name>5-methyltetrahydropteroyltri-L-glutamate</name>
        <dbReference type="ChEBI" id="CHEBI:58207"/>
    </ligand>
</feature>
<feature type="binding site" evidence="1">
    <location>
        <position position="641"/>
    </location>
    <ligand>
        <name>Zn(2+)</name>
        <dbReference type="ChEBI" id="CHEBI:29105"/>
        <note>catalytic</note>
    </ligand>
</feature>
<feature type="binding site" evidence="1">
    <location>
        <position position="643"/>
    </location>
    <ligand>
        <name>Zn(2+)</name>
        <dbReference type="ChEBI" id="CHEBI:29105"/>
        <note>catalytic</note>
    </ligand>
</feature>
<feature type="binding site" evidence="1">
    <location>
        <position position="665"/>
    </location>
    <ligand>
        <name>Zn(2+)</name>
        <dbReference type="ChEBI" id="CHEBI:29105"/>
        <note>catalytic</note>
    </ligand>
</feature>
<feature type="binding site" evidence="1">
    <location>
        <position position="726"/>
    </location>
    <ligand>
        <name>Zn(2+)</name>
        <dbReference type="ChEBI" id="CHEBI:29105"/>
        <note>catalytic</note>
    </ligand>
</feature>
<accession>Q1R4A4</accession>
<proteinExistence type="inferred from homology"/>
<gene>
    <name evidence="1" type="primary">metE</name>
    <name type="ordered locus">UTI89_C4393</name>
</gene>
<evidence type="ECO:0000255" key="1">
    <source>
        <dbReference type="HAMAP-Rule" id="MF_00172"/>
    </source>
</evidence>